<proteinExistence type="inferred from homology"/>
<feature type="chain" id="PRO_0000364452" description="Fructose-1,6-bisphosphatase class 1">
    <location>
        <begin position="1"/>
        <end position="334"/>
    </location>
</feature>
<feature type="binding site" evidence="1">
    <location>
        <position position="90"/>
    </location>
    <ligand>
        <name>Mg(2+)</name>
        <dbReference type="ChEBI" id="CHEBI:18420"/>
        <label>1</label>
    </ligand>
</feature>
<feature type="binding site" evidence="1">
    <location>
        <position position="113"/>
    </location>
    <ligand>
        <name>Mg(2+)</name>
        <dbReference type="ChEBI" id="CHEBI:18420"/>
        <label>1</label>
    </ligand>
</feature>
<feature type="binding site" evidence="1">
    <location>
        <position position="113"/>
    </location>
    <ligand>
        <name>Mg(2+)</name>
        <dbReference type="ChEBI" id="CHEBI:18420"/>
        <label>2</label>
    </ligand>
</feature>
<feature type="binding site" evidence="1">
    <location>
        <position position="115"/>
    </location>
    <ligand>
        <name>Mg(2+)</name>
        <dbReference type="ChEBI" id="CHEBI:18420"/>
        <label>1</label>
    </ligand>
</feature>
<feature type="binding site" evidence="1">
    <location>
        <begin position="116"/>
        <end position="119"/>
    </location>
    <ligand>
        <name>substrate</name>
    </ligand>
</feature>
<feature type="binding site" evidence="1">
    <location>
        <position position="116"/>
    </location>
    <ligand>
        <name>Mg(2+)</name>
        <dbReference type="ChEBI" id="CHEBI:18420"/>
        <label>2</label>
    </ligand>
</feature>
<feature type="binding site" evidence="1">
    <location>
        <position position="209"/>
    </location>
    <ligand>
        <name>substrate</name>
    </ligand>
</feature>
<feature type="binding site" evidence="1">
    <location>
        <position position="242"/>
    </location>
    <ligand>
        <name>substrate</name>
    </ligand>
</feature>
<feature type="binding site" evidence="1">
    <location>
        <position position="272"/>
    </location>
    <ligand>
        <name>substrate</name>
    </ligand>
</feature>
<feature type="binding site" evidence="1">
    <location>
        <position position="278"/>
    </location>
    <ligand>
        <name>Mg(2+)</name>
        <dbReference type="ChEBI" id="CHEBI:18420"/>
        <label>2</label>
    </ligand>
</feature>
<accession>B0BQZ1</accession>
<comment type="catalytic activity">
    <reaction evidence="1">
        <text>beta-D-fructose 1,6-bisphosphate + H2O = beta-D-fructose 6-phosphate + phosphate</text>
        <dbReference type="Rhea" id="RHEA:11064"/>
        <dbReference type="ChEBI" id="CHEBI:15377"/>
        <dbReference type="ChEBI" id="CHEBI:32966"/>
        <dbReference type="ChEBI" id="CHEBI:43474"/>
        <dbReference type="ChEBI" id="CHEBI:57634"/>
        <dbReference type="EC" id="3.1.3.11"/>
    </reaction>
</comment>
<comment type="cofactor">
    <cofactor evidence="1">
        <name>Mg(2+)</name>
        <dbReference type="ChEBI" id="CHEBI:18420"/>
    </cofactor>
    <text evidence="1">Binds 2 magnesium ions per subunit.</text>
</comment>
<comment type="pathway">
    <text evidence="1">Carbohydrate biosynthesis; gluconeogenesis.</text>
</comment>
<comment type="subunit">
    <text evidence="1">Homotetramer.</text>
</comment>
<comment type="subcellular location">
    <subcellularLocation>
        <location evidence="1">Cytoplasm</location>
    </subcellularLocation>
</comment>
<comment type="similarity">
    <text evidence="1">Belongs to the FBPase class 1 family.</text>
</comment>
<name>F16PA_ACTPJ</name>
<dbReference type="EC" id="3.1.3.11" evidence="1"/>
<dbReference type="EMBL" id="CP000687">
    <property type="protein sequence ID" value="ABY69976.1"/>
    <property type="molecule type" value="Genomic_DNA"/>
</dbReference>
<dbReference type="RefSeq" id="WP_005598591.1">
    <property type="nucleotide sequence ID" value="NC_010278.1"/>
</dbReference>
<dbReference type="SMR" id="B0BQZ1"/>
<dbReference type="GeneID" id="48599665"/>
<dbReference type="KEGG" id="apj:APJL_1420"/>
<dbReference type="HOGENOM" id="CLU_039977_2_2_6"/>
<dbReference type="UniPathway" id="UPA00138"/>
<dbReference type="Proteomes" id="UP000008547">
    <property type="component" value="Chromosome"/>
</dbReference>
<dbReference type="GO" id="GO:0005829">
    <property type="term" value="C:cytosol"/>
    <property type="evidence" value="ECO:0007669"/>
    <property type="project" value="TreeGrafter"/>
</dbReference>
<dbReference type="GO" id="GO:0042132">
    <property type="term" value="F:fructose 1,6-bisphosphate 1-phosphatase activity"/>
    <property type="evidence" value="ECO:0007669"/>
    <property type="project" value="UniProtKB-UniRule"/>
</dbReference>
<dbReference type="GO" id="GO:0000287">
    <property type="term" value="F:magnesium ion binding"/>
    <property type="evidence" value="ECO:0007669"/>
    <property type="project" value="UniProtKB-UniRule"/>
</dbReference>
<dbReference type="GO" id="GO:0030388">
    <property type="term" value="P:fructose 1,6-bisphosphate metabolic process"/>
    <property type="evidence" value="ECO:0007669"/>
    <property type="project" value="TreeGrafter"/>
</dbReference>
<dbReference type="GO" id="GO:0006002">
    <property type="term" value="P:fructose 6-phosphate metabolic process"/>
    <property type="evidence" value="ECO:0007669"/>
    <property type="project" value="TreeGrafter"/>
</dbReference>
<dbReference type="GO" id="GO:0006000">
    <property type="term" value="P:fructose metabolic process"/>
    <property type="evidence" value="ECO:0007669"/>
    <property type="project" value="TreeGrafter"/>
</dbReference>
<dbReference type="GO" id="GO:0006094">
    <property type="term" value="P:gluconeogenesis"/>
    <property type="evidence" value="ECO:0007669"/>
    <property type="project" value="UniProtKB-UniRule"/>
</dbReference>
<dbReference type="GO" id="GO:0005986">
    <property type="term" value="P:sucrose biosynthetic process"/>
    <property type="evidence" value="ECO:0007669"/>
    <property type="project" value="TreeGrafter"/>
</dbReference>
<dbReference type="CDD" id="cd00354">
    <property type="entry name" value="FBPase"/>
    <property type="match status" value="1"/>
</dbReference>
<dbReference type="FunFam" id="3.30.540.10:FF:000002">
    <property type="entry name" value="Fructose-1,6-bisphosphatase class 1"/>
    <property type="match status" value="1"/>
</dbReference>
<dbReference type="FunFam" id="3.40.190.80:FF:000001">
    <property type="entry name" value="Fructose-1,6-bisphosphatase class 1"/>
    <property type="match status" value="1"/>
</dbReference>
<dbReference type="Gene3D" id="3.40.190.80">
    <property type="match status" value="1"/>
</dbReference>
<dbReference type="Gene3D" id="3.30.540.10">
    <property type="entry name" value="Fructose-1,6-Bisphosphatase, subunit A, domain 1"/>
    <property type="match status" value="1"/>
</dbReference>
<dbReference type="HAMAP" id="MF_01855">
    <property type="entry name" value="FBPase_class1"/>
    <property type="match status" value="1"/>
</dbReference>
<dbReference type="InterPro" id="IPR044015">
    <property type="entry name" value="FBPase_C_dom"/>
</dbReference>
<dbReference type="InterPro" id="IPR000146">
    <property type="entry name" value="FBPase_class-1"/>
</dbReference>
<dbReference type="InterPro" id="IPR033391">
    <property type="entry name" value="FBPase_N"/>
</dbReference>
<dbReference type="InterPro" id="IPR028343">
    <property type="entry name" value="FBPtase"/>
</dbReference>
<dbReference type="InterPro" id="IPR020548">
    <property type="entry name" value="Fructose_bisphosphatase_AS"/>
</dbReference>
<dbReference type="NCBIfam" id="NF006778">
    <property type="entry name" value="PRK09293.1-1"/>
    <property type="match status" value="1"/>
</dbReference>
<dbReference type="PANTHER" id="PTHR11556">
    <property type="entry name" value="FRUCTOSE-1,6-BISPHOSPHATASE-RELATED"/>
    <property type="match status" value="1"/>
</dbReference>
<dbReference type="PANTHER" id="PTHR11556:SF35">
    <property type="entry name" value="SEDOHEPTULOSE-1,7-BISPHOSPHATASE, CHLOROPLASTIC"/>
    <property type="match status" value="1"/>
</dbReference>
<dbReference type="Pfam" id="PF00316">
    <property type="entry name" value="FBPase"/>
    <property type="match status" value="1"/>
</dbReference>
<dbReference type="Pfam" id="PF18913">
    <property type="entry name" value="FBPase_C"/>
    <property type="match status" value="1"/>
</dbReference>
<dbReference type="PIRSF" id="PIRSF500210">
    <property type="entry name" value="FBPtase"/>
    <property type="match status" value="1"/>
</dbReference>
<dbReference type="PIRSF" id="PIRSF000904">
    <property type="entry name" value="FBPtase_SBPase"/>
    <property type="match status" value="1"/>
</dbReference>
<dbReference type="PRINTS" id="PR00115">
    <property type="entry name" value="F16BPHPHTASE"/>
</dbReference>
<dbReference type="SUPFAM" id="SSF56655">
    <property type="entry name" value="Carbohydrate phosphatase"/>
    <property type="match status" value="1"/>
</dbReference>
<dbReference type="PROSITE" id="PS00124">
    <property type="entry name" value="FBPASE"/>
    <property type="match status" value="1"/>
</dbReference>
<gene>
    <name evidence="1" type="primary">fbp</name>
    <name type="ordered locus">APJL_1420</name>
</gene>
<reference key="1">
    <citation type="journal article" date="2008" name="PLoS ONE">
        <title>Genome biology of Actinobacillus pleuropneumoniae JL03, an isolate of serotype 3 prevalent in China.</title>
        <authorList>
            <person name="Xu Z."/>
            <person name="Zhou Y."/>
            <person name="Li L."/>
            <person name="Zhou R."/>
            <person name="Xiao S."/>
            <person name="Wan Y."/>
            <person name="Zhang S."/>
            <person name="Wang K."/>
            <person name="Li W."/>
            <person name="Li L."/>
            <person name="Jin H."/>
            <person name="Kang M."/>
            <person name="Dalai B."/>
            <person name="Li T."/>
            <person name="Liu L."/>
            <person name="Cheng Y."/>
            <person name="Zhang L."/>
            <person name="Xu T."/>
            <person name="Zheng H."/>
            <person name="Pu S."/>
            <person name="Wang B."/>
            <person name="Gu W."/>
            <person name="Zhang X.L."/>
            <person name="Zhu G.-F."/>
            <person name="Wang S."/>
            <person name="Zhao G.-P."/>
            <person name="Chen H."/>
        </authorList>
    </citation>
    <scope>NUCLEOTIDE SEQUENCE [LARGE SCALE GENOMIC DNA]</scope>
    <source>
        <strain>JL03</strain>
    </source>
</reference>
<protein>
    <recommendedName>
        <fullName evidence="1">Fructose-1,6-bisphosphatase class 1</fullName>
        <shortName evidence="1">FBPase class 1</shortName>
        <ecNumber evidence="1">3.1.3.11</ecNumber>
    </recommendedName>
    <alternativeName>
        <fullName evidence="1">D-fructose-1,6-bisphosphate 1-phosphohydrolase class 1</fullName>
    </alternativeName>
</protein>
<keyword id="KW-0119">Carbohydrate metabolism</keyword>
<keyword id="KW-0963">Cytoplasm</keyword>
<keyword id="KW-0378">Hydrolase</keyword>
<keyword id="KW-0460">Magnesium</keyword>
<keyword id="KW-0479">Metal-binding</keyword>
<organism>
    <name type="scientific">Actinobacillus pleuropneumoniae serotype 3 (strain JL03)</name>
    <dbReference type="NCBI Taxonomy" id="434271"/>
    <lineage>
        <taxon>Bacteria</taxon>
        <taxon>Pseudomonadati</taxon>
        <taxon>Pseudomonadota</taxon>
        <taxon>Gammaproteobacteria</taxon>
        <taxon>Pasteurellales</taxon>
        <taxon>Pasteurellaceae</taxon>
        <taxon>Actinobacillus</taxon>
    </lineage>
</organism>
<evidence type="ECO:0000255" key="1">
    <source>
        <dbReference type="HAMAP-Rule" id="MF_01855"/>
    </source>
</evidence>
<sequence length="334" mass="36955">MKTLGEFIIEKQAEYPEAKGELSGILSSIRLAAKIIHREINRAGLSQDILGVAGSENIQGEAQMKLDVFANETMKKALLAREEVAGFASEEDDNFVAFENDRAKNAKYILMTDPLDGSSNIDVNVSVGTIFSIYKRVSPIGSPVTMEDFLQEGRKQVASGYVTYGSSTMLVYTTGNGVNGFTYDPSLGLFILSHPDMKMPTEGKYYSINEGQYVTFPMGVKKFIKYCQESDEATKRPYSSRYIGSLVSDFHRNLLKGGIYIYPTSTVYPKGKLRLLYEGNPMAFLAEQAGGMATDGFNPILDIKPSELHQRVPFFVGSTSMVKQADKFMQECAE</sequence>